<sequence length="288" mass="30599">MNAQLIDGKAVAARVRAEVKAEVDRLKLEHGLTPGLAVVRVGEDPASKVYVNGKKKAAEEVGFRSWELHPDEGITQAALLEVIHQLNADPAVHGILVQLPLPRHIDPDVIISAVKPEKDVDGFHPLNAGNLLLGRSTTRACTPYGVMRLLEEIGCDPAGKRAVVVGRSNIVGKPMALMLLQKNATVTICHSKSDLRREVEGADILVVAVGAAELVKGAWIKPGAVVIDVGMNRKPDGKLVGDVEFAAAAERASFITPVPGGVGPMTIAMLMRNTLDAAVRYGLVPVVR</sequence>
<comment type="function">
    <text evidence="1">Catalyzes the oxidation of 5,10-methylenetetrahydrofolate to 5,10-methenyltetrahydrofolate and then the hydrolysis of 5,10-methenyltetrahydrofolate to 10-formyltetrahydrofolate.</text>
</comment>
<comment type="catalytic activity">
    <reaction evidence="1">
        <text>(6R)-5,10-methylene-5,6,7,8-tetrahydrofolate + NADP(+) = (6R)-5,10-methenyltetrahydrofolate + NADPH</text>
        <dbReference type="Rhea" id="RHEA:22812"/>
        <dbReference type="ChEBI" id="CHEBI:15636"/>
        <dbReference type="ChEBI" id="CHEBI:57455"/>
        <dbReference type="ChEBI" id="CHEBI:57783"/>
        <dbReference type="ChEBI" id="CHEBI:58349"/>
        <dbReference type="EC" id="1.5.1.5"/>
    </reaction>
</comment>
<comment type="catalytic activity">
    <reaction evidence="1">
        <text>(6R)-5,10-methenyltetrahydrofolate + H2O = (6R)-10-formyltetrahydrofolate + H(+)</text>
        <dbReference type="Rhea" id="RHEA:23700"/>
        <dbReference type="ChEBI" id="CHEBI:15377"/>
        <dbReference type="ChEBI" id="CHEBI:15378"/>
        <dbReference type="ChEBI" id="CHEBI:57455"/>
        <dbReference type="ChEBI" id="CHEBI:195366"/>
        <dbReference type="EC" id="3.5.4.9"/>
    </reaction>
</comment>
<comment type="pathway">
    <text evidence="1">One-carbon metabolism; tetrahydrofolate interconversion.</text>
</comment>
<comment type="subunit">
    <text evidence="1">Homodimer.</text>
</comment>
<comment type="similarity">
    <text evidence="1">Belongs to the tetrahydrofolate dehydrogenase/cyclohydrolase family.</text>
</comment>
<name>FOLD2_MYXXD</name>
<evidence type="ECO:0000255" key="1">
    <source>
        <dbReference type="HAMAP-Rule" id="MF_01576"/>
    </source>
</evidence>
<accession>Q1D7Y2</accession>
<feature type="chain" id="PRO_0000268413" description="Bifunctional protein FolD 2">
    <location>
        <begin position="1"/>
        <end position="288"/>
    </location>
</feature>
<feature type="binding site" evidence="1">
    <location>
        <begin position="166"/>
        <end position="168"/>
    </location>
    <ligand>
        <name>NADP(+)</name>
        <dbReference type="ChEBI" id="CHEBI:58349"/>
    </ligand>
</feature>
<feature type="binding site" evidence="1">
    <location>
        <position position="191"/>
    </location>
    <ligand>
        <name>NADP(+)</name>
        <dbReference type="ChEBI" id="CHEBI:58349"/>
    </ligand>
</feature>
<gene>
    <name evidence="1" type="primary">folD2</name>
    <name type="ordered locus">MXAN_3032</name>
</gene>
<protein>
    <recommendedName>
        <fullName evidence="1">Bifunctional protein FolD 2</fullName>
    </recommendedName>
    <domain>
        <recommendedName>
            <fullName evidence="1">Methylenetetrahydrofolate dehydrogenase</fullName>
            <ecNumber evidence="1">1.5.1.5</ecNumber>
        </recommendedName>
    </domain>
    <domain>
        <recommendedName>
            <fullName evidence="1">Methenyltetrahydrofolate cyclohydrolase</fullName>
            <ecNumber evidence="1">3.5.4.9</ecNumber>
        </recommendedName>
    </domain>
</protein>
<proteinExistence type="inferred from homology"/>
<organism>
    <name type="scientific">Myxococcus xanthus (strain DK1622)</name>
    <dbReference type="NCBI Taxonomy" id="246197"/>
    <lineage>
        <taxon>Bacteria</taxon>
        <taxon>Pseudomonadati</taxon>
        <taxon>Myxococcota</taxon>
        <taxon>Myxococcia</taxon>
        <taxon>Myxococcales</taxon>
        <taxon>Cystobacterineae</taxon>
        <taxon>Myxococcaceae</taxon>
        <taxon>Myxococcus</taxon>
    </lineage>
</organism>
<reference key="1">
    <citation type="journal article" date="2006" name="Proc. Natl. Acad. Sci. U.S.A.">
        <title>Evolution of sensory complexity recorded in a myxobacterial genome.</title>
        <authorList>
            <person name="Goldman B.S."/>
            <person name="Nierman W.C."/>
            <person name="Kaiser D."/>
            <person name="Slater S.C."/>
            <person name="Durkin A.S."/>
            <person name="Eisen J.A."/>
            <person name="Ronning C.M."/>
            <person name="Barbazuk W.B."/>
            <person name="Blanchard M."/>
            <person name="Field C."/>
            <person name="Halling C."/>
            <person name="Hinkle G."/>
            <person name="Iartchuk O."/>
            <person name="Kim H.S."/>
            <person name="Mackenzie C."/>
            <person name="Madupu R."/>
            <person name="Miller N."/>
            <person name="Shvartsbeyn A."/>
            <person name="Sullivan S.A."/>
            <person name="Vaudin M."/>
            <person name="Wiegand R."/>
            <person name="Kaplan H.B."/>
        </authorList>
    </citation>
    <scope>NUCLEOTIDE SEQUENCE [LARGE SCALE GENOMIC DNA]</scope>
    <source>
        <strain>DK1622</strain>
    </source>
</reference>
<keyword id="KW-0028">Amino-acid biosynthesis</keyword>
<keyword id="KW-0368">Histidine biosynthesis</keyword>
<keyword id="KW-0378">Hydrolase</keyword>
<keyword id="KW-0486">Methionine biosynthesis</keyword>
<keyword id="KW-0511">Multifunctional enzyme</keyword>
<keyword id="KW-0521">NADP</keyword>
<keyword id="KW-0554">One-carbon metabolism</keyword>
<keyword id="KW-0560">Oxidoreductase</keyword>
<keyword id="KW-0658">Purine biosynthesis</keyword>
<keyword id="KW-1185">Reference proteome</keyword>
<dbReference type="EC" id="1.5.1.5" evidence="1"/>
<dbReference type="EC" id="3.5.4.9" evidence="1"/>
<dbReference type="EMBL" id="CP000113">
    <property type="protein sequence ID" value="ABF87831.1"/>
    <property type="molecule type" value="Genomic_DNA"/>
</dbReference>
<dbReference type="RefSeq" id="WP_011553088.1">
    <property type="nucleotide sequence ID" value="NC_008095.1"/>
</dbReference>
<dbReference type="SMR" id="Q1D7Y2"/>
<dbReference type="STRING" id="246197.MXAN_3032"/>
<dbReference type="EnsemblBacteria" id="ABF87831">
    <property type="protein sequence ID" value="ABF87831"/>
    <property type="gene ID" value="MXAN_3032"/>
</dbReference>
<dbReference type="GeneID" id="41360394"/>
<dbReference type="KEGG" id="mxa:MXAN_3032"/>
<dbReference type="eggNOG" id="COG0190">
    <property type="taxonomic scope" value="Bacteria"/>
</dbReference>
<dbReference type="HOGENOM" id="CLU_034045_2_1_7"/>
<dbReference type="OrthoDB" id="9803580at2"/>
<dbReference type="UniPathway" id="UPA00193"/>
<dbReference type="Proteomes" id="UP000002402">
    <property type="component" value="Chromosome"/>
</dbReference>
<dbReference type="GO" id="GO:0005829">
    <property type="term" value="C:cytosol"/>
    <property type="evidence" value="ECO:0007669"/>
    <property type="project" value="TreeGrafter"/>
</dbReference>
<dbReference type="GO" id="GO:0004477">
    <property type="term" value="F:methenyltetrahydrofolate cyclohydrolase activity"/>
    <property type="evidence" value="ECO:0007669"/>
    <property type="project" value="UniProtKB-UniRule"/>
</dbReference>
<dbReference type="GO" id="GO:0004488">
    <property type="term" value="F:methylenetetrahydrofolate dehydrogenase (NADP+) activity"/>
    <property type="evidence" value="ECO:0007669"/>
    <property type="project" value="UniProtKB-UniRule"/>
</dbReference>
<dbReference type="GO" id="GO:0000105">
    <property type="term" value="P:L-histidine biosynthetic process"/>
    <property type="evidence" value="ECO:0007669"/>
    <property type="project" value="UniProtKB-KW"/>
</dbReference>
<dbReference type="GO" id="GO:0009086">
    <property type="term" value="P:methionine biosynthetic process"/>
    <property type="evidence" value="ECO:0007669"/>
    <property type="project" value="UniProtKB-KW"/>
</dbReference>
<dbReference type="GO" id="GO:0006164">
    <property type="term" value="P:purine nucleotide biosynthetic process"/>
    <property type="evidence" value="ECO:0007669"/>
    <property type="project" value="UniProtKB-KW"/>
</dbReference>
<dbReference type="GO" id="GO:0035999">
    <property type="term" value="P:tetrahydrofolate interconversion"/>
    <property type="evidence" value="ECO:0007669"/>
    <property type="project" value="UniProtKB-UniRule"/>
</dbReference>
<dbReference type="CDD" id="cd01080">
    <property type="entry name" value="NAD_bind_m-THF_DH_Cyclohyd"/>
    <property type="match status" value="1"/>
</dbReference>
<dbReference type="FunFam" id="3.40.50.720:FF:000006">
    <property type="entry name" value="Bifunctional protein FolD"/>
    <property type="match status" value="1"/>
</dbReference>
<dbReference type="FunFam" id="3.40.50.10860:FF:000005">
    <property type="entry name" value="C-1-tetrahydrofolate synthase, cytoplasmic, putative"/>
    <property type="match status" value="1"/>
</dbReference>
<dbReference type="Gene3D" id="3.40.50.10860">
    <property type="entry name" value="Leucine Dehydrogenase, chain A, domain 1"/>
    <property type="match status" value="1"/>
</dbReference>
<dbReference type="Gene3D" id="3.40.50.720">
    <property type="entry name" value="NAD(P)-binding Rossmann-like Domain"/>
    <property type="match status" value="1"/>
</dbReference>
<dbReference type="HAMAP" id="MF_01576">
    <property type="entry name" value="THF_DHG_CYH"/>
    <property type="match status" value="1"/>
</dbReference>
<dbReference type="InterPro" id="IPR046346">
    <property type="entry name" value="Aminoacid_DH-like_N_sf"/>
</dbReference>
<dbReference type="InterPro" id="IPR036291">
    <property type="entry name" value="NAD(P)-bd_dom_sf"/>
</dbReference>
<dbReference type="InterPro" id="IPR000672">
    <property type="entry name" value="THF_DH/CycHdrlase"/>
</dbReference>
<dbReference type="InterPro" id="IPR020630">
    <property type="entry name" value="THF_DH/CycHdrlase_cat_dom"/>
</dbReference>
<dbReference type="InterPro" id="IPR020867">
    <property type="entry name" value="THF_DH/CycHdrlase_CS"/>
</dbReference>
<dbReference type="InterPro" id="IPR020631">
    <property type="entry name" value="THF_DH/CycHdrlase_NAD-bd_dom"/>
</dbReference>
<dbReference type="NCBIfam" id="NF008058">
    <property type="entry name" value="PRK10792.1"/>
    <property type="match status" value="1"/>
</dbReference>
<dbReference type="NCBIfam" id="NF010783">
    <property type="entry name" value="PRK14186.1"/>
    <property type="match status" value="1"/>
</dbReference>
<dbReference type="PANTHER" id="PTHR48099:SF5">
    <property type="entry name" value="C-1-TETRAHYDROFOLATE SYNTHASE, CYTOPLASMIC"/>
    <property type="match status" value="1"/>
</dbReference>
<dbReference type="PANTHER" id="PTHR48099">
    <property type="entry name" value="C-1-TETRAHYDROFOLATE SYNTHASE, CYTOPLASMIC-RELATED"/>
    <property type="match status" value="1"/>
</dbReference>
<dbReference type="Pfam" id="PF00763">
    <property type="entry name" value="THF_DHG_CYH"/>
    <property type="match status" value="1"/>
</dbReference>
<dbReference type="Pfam" id="PF02882">
    <property type="entry name" value="THF_DHG_CYH_C"/>
    <property type="match status" value="1"/>
</dbReference>
<dbReference type="PRINTS" id="PR00085">
    <property type="entry name" value="THFDHDRGNASE"/>
</dbReference>
<dbReference type="SUPFAM" id="SSF53223">
    <property type="entry name" value="Aminoacid dehydrogenase-like, N-terminal domain"/>
    <property type="match status" value="1"/>
</dbReference>
<dbReference type="SUPFAM" id="SSF51735">
    <property type="entry name" value="NAD(P)-binding Rossmann-fold domains"/>
    <property type="match status" value="1"/>
</dbReference>
<dbReference type="PROSITE" id="PS00767">
    <property type="entry name" value="THF_DHG_CYH_2"/>
    <property type="match status" value="1"/>
</dbReference>